<sequence length="87" mass="9818">MKTKLNELLEFPCSFTYKVMGLAQPELVDQVVEVVQRHAPGDYNPQVKPSSKGNYHSVSITITATHIDQVETLYDELGNIEIVRMVL</sequence>
<reference key="1">
    <citation type="submission" date="2007-09" db="EMBL/GenBank/DDBJ databases">
        <title>Complete sequence of chromosome of Serratia proteamaculans 568.</title>
        <authorList>
            <consortium name="US DOE Joint Genome Institute"/>
            <person name="Copeland A."/>
            <person name="Lucas S."/>
            <person name="Lapidus A."/>
            <person name="Barry K."/>
            <person name="Glavina del Rio T."/>
            <person name="Dalin E."/>
            <person name="Tice H."/>
            <person name="Pitluck S."/>
            <person name="Chain P."/>
            <person name="Malfatti S."/>
            <person name="Shin M."/>
            <person name="Vergez L."/>
            <person name="Schmutz J."/>
            <person name="Larimer F."/>
            <person name="Land M."/>
            <person name="Hauser L."/>
            <person name="Kyrpides N."/>
            <person name="Kim E."/>
            <person name="Taghavi S."/>
            <person name="Newman L."/>
            <person name="Vangronsveld J."/>
            <person name="van der Lelie D."/>
            <person name="Richardson P."/>
        </authorList>
    </citation>
    <scope>NUCLEOTIDE SEQUENCE [LARGE SCALE GENOMIC DNA]</scope>
    <source>
        <strain>568</strain>
    </source>
</reference>
<feature type="chain" id="PRO_1000061888" description="UPF0250 protein Spro_1197">
    <location>
        <begin position="1"/>
        <end position="87"/>
    </location>
</feature>
<name>Y1197_SERP5</name>
<protein>
    <recommendedName>
        <fullName evidence="1">UPF0250 protein Spro_1197</fullName>
    </recommendedName>
</protein>
<evidence type="ECO:0000255" key="1">
    <source>
        <dbReference type="HAMAP-Rule" id="MF_00659"/>
    </source>
</evidence>
<comment type="similarity">
    <text evidence="1">Belongs to the UPF0250 family.</text>
</comment>
<gene>
    <name type="ordered locus">Spro_1197</name>
</gene>
<proteinExistence type="inferred from homology"/>
<dbReference type="EMBL" id="CP000826">
    <property type="protein sequence ID" value="ABV40301.1"/>
    <property type="molecule type" value="Genomic_DNA"/>
</dbReference>
<dbReference type="SMR" id="A8GB11"/>
<dbReference type="STRING" id="399741.Spro_1197"/>
<dbReference type="KEGG" id="spe:Spro_1197"/>
<dbReference type="eggNOG" id="COG2921">
    <property type="taxonomic scope" value="Bacteria"/>
</dbReference>
<dbReference type="HOGENOM" id="CLU_161438_2_1_6"/>
<dbReference type="OrthoDB" id="9793424at2"/>
<dbReference type="GO" id="GO:0005829">
    <property type="term" value="C:cytosol"/>
    <property type="evidence" value="ECO:0007669"/>
    <property type="project" value="TreeGrafter"/>
</dbReference>
<dbReference type="FunFam" id="3.30.70.260:FF:000002">
    <property type="entry name" value="UPF0250 protein YbeD"/>
    <property type="match status" value="1"/>
</dbReference>
<dbReference type="Gene3D" id="3.30.70.260">
    <property type="match status" value="1"/>
</dbReference>
<dbReference type="HAMAP" id="MF_00659">
    <property type="entry name" value="UPF0250"/>
    <property type="match status" value="1"/>
</dbReference>
<dbReference type="InterPro" id="IPR007454">
    <property type="entry name" value="UPF0250_YbeD-like"/>
</dbReference>
<dbReference type="InterPro" id="IPR027471">
    <property type="entry name" value="YbeD-like_sf"/>
</dbReference>
<dbReference type="NCBIfam" id="NF003447">
    <property type="entry name" value="PRK04998.1"/>
    <property type="match status" value="1"/>
</dbReference>
<dbReference type="PANTHER" id="PTHR38036">
    <property type="entry name" value="UPF0250 PROTEIN YBED"/>
    <property type="match status" value="1"/>
</dbReference>
<dbReference type="PANTHER" id="PTHR38036:SF1">
    <property type="entry name" value="UPF0250 PROTEIN YBED"/>
    <property type="match status" value="1"/>
</dbReference>
<dbReference type="Pfam" id="PF04359">
    <property type="entry name" value="DUF493"/>
    <property type="match status" value="1"/>
</dbReference>
<dbReference type="SUPFAM" id="SSF117991">
    <property type="entry name" value="YbeD/HP0495-like"/>
    <property type="match status" value="1"/>
</dbReference>
<accession>A8GB11</accession>
<organism>
    <name type="scientific">Serratia proteamaculans (strain 568)</name>
    <dbReference type="NCBI Taxonomy" id="399741"/>
    <lineage>
        <taxon>Bacteria</taxon>
        <taxon>Pseudomonadati</taxon>
        <taxon>Pseudomonadota</taxon>
        <taxon>Gammaproteobacteria</taxon>
        <taxon>Enterobacterales</taxon>
        <taxon>Yersiniaceae</taxon>
        <taxon>Serratia</taxon>
    </lineage>
</organism>